<sequence>MDEGTGLQPGAGEQLEAPATAEAVQERCEPETLRSKSLPVLSSASCRPSLSPTSGDANPAFGCVDSSGHQELKQGPNPLAPSPSAPSTSAGLGDCNHRVDLSKTFSVSSALAMLQERRCLYVVLTDSRCFLVCMCFLTFIQALMVSGYLSSVITTIERRYSLKSSESGLLVSCFDIGNLVVVVFVSYFGGRGRRPLWLAVGGLLIAFGAALFALPHFISPPYQIQELNASAPNDGLCQGGNSTATLEPPACPKDSGGNNHWVYVALFICAQILIGMGSTPIYTLGPTYLDDNVKKENSSLYLAIMYVMGALGPAVGYLLGGLLIGFYVDPRNPVHLDQNDPRFIGNWWSGFLLCAIAMFLVIFPMFTFPKKLPPRHKKKKKKKFSVDAVSDDDVLKEKSNNSEQADKKVSSMGFGKDVRDLPRAAVRILSNMTFLFVSLSYTAESAIVTAFITFIPKFIESQFGIPASNASIYTGVIIVPSAGVGIVLGGYIIKKLKLGARESAKLAMICSGVSLLCFSTLFIVGCESINLGGINIPYTTGPSLTMPHRNLTGSCNVNCGCKIHEYEPVCGSDGITYFNPCLAGCVNSGNLSTGIRNYTECTCVQSRQVITPPTVGQRSQLRVVIVKTYLNENGYAVSGKCKRTCNTLIPFLVFLFIVTFITACAQPSAIIVTLRSVEDEERPFALGMQFVLLRTLAYIPTPIYFGAVIDTTCMLWQQECGVQGSCWEYNVTSFRFVYFGLAAGLKFVGFIFIFLAWYSIKYKEDGLQRRRQREFPLSTVSERVGHPDNARTRSCPAFSTQGEFHEETGLQKGIQCAAQTYPGPFPEAISSSADPGLEESPAALEPPS</sequence>
<feature type="chain" id="PRO_0000191070" description="Solute carrier organic anion transporter family member 5A1">
    <location>
        <begin position="1"/>
        <end position="848"/>
    </location>
</feature>
<feature type="topological domain" description="Cytoplasmic" evidence="1">
    <location>
        <begin position="1"/>
        <end position="128"/>
    </location>
</feature>
<feature type="transmembrane region" description="Helical; Name=1" evidence="1">
    <location>
        <begin position="129"/>
        <end position="149"/>
    </location>
</feature>
<feature type="topological domain" description="Extracellular" evidence="1">
    <location>
        <begin position="150"/>
        <end position="168"/>
    </location>
</feature>
<feature type="transmembrane region" description="Helical; Name=2" evidence="1">
    <location>
        <begin position="169"/>
        <end position="189"/>
    </location>
</feature>
<feature type="topological domain" description="Cytoplasmic" evidence="1">
    <location>
        <begin position="190"/>
        <end position="195"/>
    </location>
</feature>
<feature type="transmembrane region" description="Helical; Name=3" evidence="1">
    <location>
        <begin position="196"/>
        <end position="220"/>
    </location>
</feature>
<feature type="topological domain" description="Extracellular" evidence="1">
    <location>
        <begin position="221"/>
        <end position="260"/>
    </location>
</feature>
<feature type="transmembrane region" description="Helical; Name=4" evidence="1">
    <location>
        <begin position="261"/>
        <end position="290"/>
    </location>
</feature>
<feature type="topological domain" description="Cytoplasmic" evidence="1">
    <location>
        <begin position="291"/>
        <end position="309"/>
    </location>
</feature>
<feature type="transmembrane region" description="Helical; Name=5" evidence="1">
    <location>
        <begin position="310"/>
        <end position="329"/>
    </location>
</feature>
<feature type="topological domain" description="Extracellular" evidence="1">
    <location>
        <begin position="330"/>
        <end position="344"/>
    </location>
</feature>
<feature type="transmembrane region" description="Helical; Name=6" evidence="1">
    <location>
        <begin position="345"/>
        <end position="369"/>
    </location>
</feature>
<feature type="topological domain" description="Cytoplasmic" evidence="1">
    <location>
        <begin position="370"/>
        <end position="427"/>
    </location>
</feature>
<feature type="transmembrane region" description="Helical; Name=7" evidence="1">
    <location>
        <begin position="428"/>
        <end position="449"/>
    </location>
</feature>
<feature type="topological domain" description="Extracellular" evidence="1">
    <location>
        <begin position="450"/>
        <end position="469"/>
    </location>
</feature>
<feature type="transmembrane region" description="Helical; Name=8" evidence="1">
    <location>
        <begin position="470"/>
        <end position="493"/>
    </location>
</feature>
<feature type="topological domain" description="Cytoplasmic" evidence="1">
    <location>
        <begin position="494"/>
        <end position="497"/>
    </location>
</feature>
<feature type="transmembrane region" description="Helical; Name=9" evidence="1">
    <location>
        <begin position="498"/>
        <end position="521"/>
    </location>
</feature>
<feature type="topological domain" description="Extracellular" evidence="1">
    <location>
        <begin position="522"/>
        <end position="651"/>
    </location>
</feature>
<feature type="transmembrane region" description="Helical; Name=10" evidence="1">
    <location>
        <begin position="652"/>
        <end position="674"/>
    </location>
</feature>
<feature type="topological domain" description="Cytoplasmic" evidence="1">
    <location>
        <begin position="675"/>
        <end position="683"/>
    </location>
</feature>
<feature type="transmembrane region" description="Helical; Name=11" evidence="1">
    <location>
        <begin position="684"/>
        <end position="709"/>
    </location>
</feature>
<feature type="topological domain" description="Extracellular" evidence="1">
    <location>
        <begin position="710"/>
        <end position="742"/>
    </location>
</feature>
<feature type="transmembrane region" description="Helical; Name=12" evidence="1">
    <location>
        <begin position="743"/>
        <end position="760"/>
    </location>
</feature>
<feature type="topological domain" description="Cytoplasmic" evidence="1">
    <location>
        <begin position="761"/>
        <end position="808"/>
    </location>
</feature>
<feature type="domain" description="Kazal-like" evidence="2">
    <location>
        <begin position="549"/>
        <end position="603"/>
    </location>
</feature>
<feature type="region of interest" description="Disordered" evidence="3">
    <location>
        <begin position="1"/>
        <end position="91"/>
    </location>
</feature>
<feature type="region of interest" description="Disordered" evidence="3">
    <location>
        <begin position="821"/>
        <end position="848"/>
    </location>
</feature>
<feature type="compositionally biased region" description="Basic and acidic residues" evidence="3">
    <location>
        <begin position="24"/>
        <end position="34"/>
    </location>
</feature>
<feature type="compositionally biased region" description="Polar residues" evidence="3">
    <location>
        <begin position="40"/>
        <end position="56"/>
    </location>
</feature>
<feature type="glycosylation site" description="N-linked (GlcNAc...) asparagine" evidence="1">
    <location>
        <position position="228"/>
    </location>
</feature>
<feature type="glycosylation site" description="N-linked (GlcNAc...) asparagine" evidence="1">
    <location>
        <position position="241"/>
    </location>
</feature>
<feature type="glycosylation site" description="N-linked (GlcNAc...) asparagine" evidence="1">
    <location>
        <position position="469"/>
    </location>
</feature>
<feature type="glycosylation site" description="N-linked (GlcNAc...) asparagine" evidence="1">
    <location>
        <position position="550"/>
    </location>
</feature>
<feature type="glycosylation site" description="N-linked (GlcNAc...) asparagine" evidence="1">
    <location>
        <position position="590"/>
    </location>
</feature>
<feature type="glycosylation site" description="N-linked (GlcNAc...) asparagine" evidence="1">
    <location>
        <position position="597"/>
    </location>
</feature>
<feature type="glycosylation site" description="N-linked (GlcNAc...) asparagine" evidence="1">
    <location>
        <position position="730"/>
    </location>
</feature>
<feature type="disulfide bond" evidence="2">
    <location>
        <begin position="555"/>
        <end position="585"/>
    </location>
</feature>
<feature type="disulfide bond" evidence="2">
    <location>
        <begin position="561"/>
        <end position="581"/>
    </location>
</feature>
<feature type="disulfide bond" evidence="2">
    <location>
        <begin position="570"/>
        <end position="601"/>
    </location>
</feature>
<feature type="splice variant" id="VSP_045498" description="In isoform 2." evidence="6">
    <location>
        <begin position="420"/>
        <end position="474"/>
    </location>
</feature>
<feature type="splice variant" id="VSP_045499" description="In isoform 3." evidence="5">
    <original>RSVEDEERPFALG</original>
    <variation>SIHSYSNLLWSSH</variation>
    <location>
        <begin position="675"/>
        <end position="687"/>
    </location>
</feature>
<feature type="splice variant" id="VSP_045500" description="In isoform 3." evidence="5">
    <location>
        <begin position="688"/>
        <end position="848"/>
    </location>
</feature>
<feature type="sequence variant" id="VAR_022041" description="In dbSNP:rs3750266." evidence="4">
    <original>L</original>
    <variation>F</variation>
    <location>
        <position position="33"/>
    </location>
</feature>
<feature type="sequence conflict" description="In Ref. 2; BAG51109." evidence="7" ref="2">
    <original>V</original>
    <variation>A</variation>
    <location>
        <position position="40"/>
    </location>
</feature>
<feature type="sequence conflict" description="In Ref. 1; AAG42207." evidence="7" ref="1">
    <original>V</original>
    <variation>L</variation>
    <location>
        <position position="264"/>
    </location>
</feature>
<feature type="sequence conflict" description="In Ref. 2; BAG51109." evidence="7" ref="2">
    <original>K</original>
    <variation>E</variation>
    <location>
        <position position="457"/>
    </location>
</feature>
<reference key="1">
    <citation type="submission" date="1999-11" db="EMBL/GenBank/DDBJ databases">
        <title>Identification and characterization of novel human OATP family members.</title>
        <authorList>
            <person name="Wu Y."/>
            <person name="Hsiang B.H."/>
            <person name="Zhu Y."/>
            <person name="Yang W.-P."/>
            <person name="Kirchgessner T.G."/>
        </authorList>
    </citation>
    <scope>NUCLEOTIDE SEQUENCE [MRNA] (ISOFORM 1)</scope>
</reference>
<reference key="2">
    <citation type="journal article" date="2004" name="Nat. Genet.">
        <title>Complete sequencing and characterization of 21,243 full-length human cDNAs.</title>
        <authorList>
            <person name="Ota T."/>
            <person name="Suzuki Y."/>
            <person name="Nishikawa T."/>
            <person name="Otsuki T."/>
            <person name="Sugiyama T."/>
            <person name="Irie R."/>
            <person name="Wakamatsu A."/>
            <person name="Hayashi K."/>
            <person name="Sato H."/>
            <person name="Nagai K."/>
            <person name="Kimura K."/>
            <person name="Makita H."/>
            <person name="Sekine M."/>
            <person name="Obayashi M."/>
            <person name="Nishi T."/>
            <person name="Shibahara T."/>
            <person name="Tanaka T."/>
            <person name="Ishii S."/>
            <person name="Yamamoto J."/>
            <person name="Saito K."/>
            <person name="Kawai Y."/>
            <person name="Isono Y."/>
            <person name="Nakamura Y."/>
            <person name="Nagahari K."/>
            <person name="Murakami K."/>
            <person name="Yasuda T."/>
            <person name="Iwayanagi T."/>
            <person name="Wagatsuma M."/>
            <person name="Shiratori A."/>
            <person name="Sudo H."/>
            <person name="Hosoiri T."/>
            <person name="Kaku Y."/>
            <person name="Kodaira H."/>
            <person name="Kondo H."/>
            <person name="Sugawara M."/>
            <person name="Takahashi M."/>
            <person name="Kanda K."/>
            <person name="Yokoi T."/>
            <person name="Furuya T."/>
            <person name="Kikkawa E."/>
            <person name="Omura Y."/>
            <person name="Abe K."/>
            <person name="Kamihara K."/>
            <person name="Katsuta N."/>
            <person name="Sato K."/>
            <person name="Tanikawa M."/>
            <person name="Yamazaki M."/>
            <person name="Ninomiya K."/>
            <person name="Ishibashi T."/>
            <person name="Yamashita H."/>
            <person name="Murakawa K."/>
            <person name="Fujimori K."/>
            <person name="Tanai H."/>
            <person name="Kimata M."/>
            <person name="Watanabe M."/>
            <person name="Hiraoka S."/>
            <person name="Chiba Y."/>
            <person name="Ishida S."/>
            <person name="Ono Y."/>
            <person name="Takiguchi S."/>
            <person name="Watanabe S."/>
            <person name="Yosida M."/>
            <person name="Hotuta T."/>
            <person name="Kusano J."/>
            <person name="Kanehori K."/>
            <person name="Takahashi-Fujii A."/>
            <person name="Hara H."/>
            <person name="Tanase T.-O."/>
            <person name="Nomura Y."/>
            <person name="Togiya S."/>
            <person name="Komai F."/>
            <person name="Hara R."/>
            <person name="Takeuchi K."/>
            <person name="Arita M."/>
            <person name="Imose N."/>
            <person name="Musashino K."/>
            <person name="Yuuki H."/>
            <person name="Oshima A."/>
            <person name="Sasaki N."/>
            <person name="Aotsuka S."/>
            <person name="Yoshikawa Y."/>
            <person name="Matsunawa H."/>
            <person name="Ichihara T."/>
            <person name="Shiohata N."/>
            <person name="Sano S."/>
            <person name="Moriya S."/>
            <person name="Momiyama H."/>
            <person name="Satoh N."/>
            <person name="Takami S."/>
            <person name="Terashima Y."/>
            <person name="Suzuki O."/>
            <person name="Nakagawa S."/>
            <person name="Senoh A."/>
            <person name="Mizoguchi H."/>
            <person name="Goto Y."/>
            <person name="Shimizu F."/>
            <person name="Wakebe H."/>
            <person name="Hishigaki H."/>
            <person name="Watanabe T."/>
            <person name="Sugiyama A."/>
            <person name="Takemoto M."/>
            <person name="Kawakami B."/>
            <person name="Yamazaki M."/>
            <person name="Watanabe K."/>
            <person name="Kumagai A."/>
            <person name="Itakura S."/>
            <person name="Fukuzumi Y."/>
            <person name="Fujimori Y."/>
            <person name="Komiyama M."/>
            <person name="Tashiro H."/>
            <person name="Tanigami A."/>
            <person name="Fujiwara T."/>
            <person name="Ono T."/>
            <person name="Yamada K."/>
            <person name="Fujii Y."/>
            <person name="Ozaki K."/>
            <person name="Hirao M."/>
            <person name="Ohmori Y."/>
            <person name="Kawabata A."/>
            <person name="Hikiji T."/>
            <person name="Kobatake N."/>
            <person name="Inagaki H."/>
            <person name="Ikema Y."/>
            <person name="Okamoto S."/>
            <person name="Okitani R."/>
            <person name="Kawakami T."/>
            <person name="Noguchi S."/>
            <person name="Itoh T."/>
            <person name="Shigeta K."/>
            <person name="Senba T."/>
            <person name="Matsumura K."/>
            <person name="Nakajima Y."/>
            <person name="Mizuno T."/>
            <person name="Morinaga M."/>
            <person name="Sasaki M."/>
            <person name="Togashi T."/>
            <person name="Oyama M."/>
            <person name="Hata H."/>
            <person name="Watanabe M."/>
            <person name="Komatsu T."/>
            <person name="Mizushima-Sugano J."/>
            <person name="Satoh T."/>
            <person name="Shirai Y."/>
            <person name="Takahashi Y."/>
            <person name="Nakagawa K."/>
            <person name="Okumura K."/>
            <person name="Nagase T."/>
            <person name="Nomura N."/>
            <person name="Kikuchi H."/>
            <person name="Masuho Y."/>
            <person name="Yamashita R."/>
            <person name="Nakai K."/>
            <person name="Yada T."/>
            <person name="Nakamura Y."/>
            <person name="Ohara O."/>
            <person name="Isogai T."/>
            <person name="Sugano S."/>
        </authorList>
    </citation>
    <scope>NUCLEOTIDE SEQUENCE [LARGE SCALE MRNA] (ISOFORM 3)</scope>
</reference>
<reference key="3">
    <citation type="journal article" date="2006" name="Nature">
        <title>DNA sequence and analysis of human chromosome 8.</title>
        <authorList>
            <person name="Nusbaum C."/>
            <person name="Mikkelsen T.S."/>
            <person name="Zody M.C."/>
            <person name="Asakawa S."/>
            <person name="Taudien S."/>
            <person name="Garber M."/>
            <person name="Kodira C.D."/>
            <person name="Schueler M.G."/>
            <person name="Shimizu A."/>
            <person name="Whittaker C.A."/>
            <person name="Chang J.L."/>
            <person name="Cuomo C.A."/>
            <person name="Dewar K."/>
            <person name="FitzGerald M.G."/>
            <person name="Yang X."/>
            <person name="Allen N.R."/>
            <person name="Anderson S."/>
            <person name="Asakawa T."/>
            <person name="Blechschmidt K."/>
            <person name="Bloom T."/>
            <person name="Borowsky M.L."/>
            <person name="Butler J."/>
            <person name="Cook A."/>
            <person name="Corum B."/>
            <person name="DeArellano K."/>
            <person name="DeCaprio D."/>
            <person name="Dooley K.T."/>
            <person name="Dorris L. III"/>
            <person name="Engels R."/>
            <person name="Gloeckner G."/>
            <person name="Hafez N."/>
            <person name="Hagopian D.S."/>
            <person name="Hall J.L."/>
            <person name="Ishikawa S.K."/>
            <person name="Jaffe D.B."/>
            <person name="Kamat A."/>
            <person name="Kudoh J."/>
            <person name="Lehmann R."/>
            <person name="Lokitsang T."/>
            <person name="Macdonald P."/>
            <person name="Major J.E."/>
            <person name="Matthews C.D."/>
            <person name="Mauceli E."/>
            <person name="Menzel U."/>
            <person name="Mihalev A.H."/>
            <person name="Minoshima S."/>
            <person name="Murayama Y."/>
            <person name="Naylor J.W."/>
            <person name="Nicol R."/>
            <person name="Nguyen C."/>
            <person name="O'Leary S.B."/>
            <person name="O'Neill K."/>
            <person name="Parker S.C.J."/>
            <person name="Polley A."/>
            <person name="Raymond C.K."/>
            <person name="Reichwald K."/>
            <person name="Rodriguez J."/>
            <person name="Sasaki T."/>
            <person name="Schilhabel M."/>
            <person name="Siddiqui R."/>
            <person name="Smith C.L."/>
            <person name="Sneddon T.P."/>
            <person name="Talamas J.A."/>
            <person name="Tenzin P."/>
            <person name="Topham K."/>
            <person name="Venkataraman V."/>
            <person name="Wen G."/>
            <person name="Yamazaki S."/>
            <person name="Young S.K."/>
            <person name="Zeng Q."/>
            <person name="Zimmer A.R."/>
            <person name="Rosenthal A."/>
            <person name="Birren B.W."/>
            <person name="Platzer M."/>
            <person name="Shimizu N."/>
            <person name="Lander E.S."/>
        </authorList>
    </citation>
    <scope>NUCLEOTIDE SEQUENCE [LARGE SCALE GENOMIC DNA]</scope>
</reference>
<reference key="4">
    <citation type="submission" date="2005-07" db="EMBL/GenBank/DDBJ databases">
        <authorList>
            <person name="Mural R.J."/>
            <person name="Istrail S."/>
            <person name="Sutton G.G."/>
            <person name="Florea L."/>
            <person name="Halpern A.L."/>
            <person name="Mobarry C.M."/>
            <person name="Lippert R."/>
            <person name="Walenz B."/>
            <person name="Shatkay H."/>
            <person name="Dew I."/>
            <person name="Miller J.R."/>
            <person name="Flanigan M.J."/>
            <person name="Edwards N.J."/>
            <person name="Bolanos R."/>
            <person name="Fasulo D."/>
            <person name="Halldorsson B.V."/>
            <person name="Hannenhalli S."/>
            <person name="Turner R."/>
            <person name="Yooseph S."/>
            <person name="Lu F."/>
            <person name="Nusskern D.R."/>
            <person name="Shue B.C."/>
            <person name="Zheng X.H."/>
            <person name="Zhong F."/>
            <person name="Delcher A.L."/>
            <person name="Huson D.H."/>
            <person name="Kravitz S.A."/>
            <person name="Mouchard L."/>
            <person name="Reinert K."/>
            <person name="Remington K.A."/>
            <person name="Clark A.G."/>
            <person name="Waterman M.S."/>
            <person name="Eichler E.E."/>
            <person name="Adams M.D."/>
            <person name="Hunkapiller M.W."/>
            <person name="Myers E.W."/>
            <person name="Venter J.C."/>
        </authorList>
    </citation>
    <scope>NUCLEOTIDE SEQUENCE [LARGE SCALE GENOMIC DNA]</scope>
</reference>
<reference key="5">
    <citation type="journal article" date="2004" name="Genome Res.">
        <title>The status, quality, and expansion of the NIH full-length cDNA project: the Mammalian Gene Collection (MGC).</title>
        <authorList>
            <consortium name="The MGC Project Team"/>
        </authorList>
    </citation>
    <scope>NUCLEOTIDE SEQUENCE [LARGE SCALE MRNA] (ISOFORMS 1 AND 2)</scope>
    <scope>VARIANT PHE-33</scope>
</reference>
<organism>
    <name type="scientific">Homo sapiens</name>
    <name type="common">Human</name>
    <dbReference type="NCBI Taxonomy" id="9606"/>
    <lineage>
        <taxon>Eukaryota</taxon>
        <taxon>Metazoa</taxon>
        <taxon>Chordata</taxon>
        <taxon>Craniata</taxon>
        <taxon>Vertebrata</taxon>
        <taxon>Euteleostomi</taxon>
        <taxon>Mammalia</taxon>
        <taxon>Eutheria</taxon>
        <taxon>Euarchontoglires</taxon>
        <taxon>Primates</taxon>
        <taxon>Haplorrhini</taxon>
        <taxon>Catarrhini</taxon>
        <taxon>Hominidae</taxon>
        <taxon>Homo</taxon>
    </lineage>
</organism>
<accession>Q9H2Y9</accession>
<accession>A4QPC2</accession>
<accession>B2RPF7</accession>
<accession>B3KMU7</accession>
<accession>E9PKK5</accession>
<accession>G3V1C0</accession>
<keyword id="KW-0025">Alternative splicing</keyword>
<keyword id="KW-1003">Cell membrane</keyword>
<keyword id="KW-1015">Disulfide bond</keyword>
<keyword id="KW-0325">Glycoprotein</keyword>
<keyword id="KW-0472">Membrane</keyword>
<keyword id="KW-1267">Proteomics identification</keyword>
<keyword id="KW-1185">Reference proteome</keyword>
<keyword id="KW-0812">Transmembrane</keyword>
<keyword id="KW-1133">Transmembrane helix</keyword>
<keyword id="KW-0813">Transport</keyword>
<gene>
    <name type="primary">SLCO5A1</name>
    <name type="synonym">OATP5A1</name>
    <name type="synonym">SLC21A15</name>
</gene>
<protein>
    <recommendedName>
        <fullName>Solute carrier organic anion transporter family member 5A1</fullName>
    </recommendedName>
    <alternativeName>
        <fullName>Organic anion transporter polypeptide-related protein 4</fullName>
        <shortName>OATP-RP4</shortName>
        <shortName>OATPRP4</shortName>
    </alternativeName>
    <alternativeName>
        <fullName>Solute carrier family 21 member 15</fullName>
    </alternativeName>
</protein>
<proteinExistence type="evidence at protein level"/>
<evidence type="ECO:0000255" key="1"/>
<evidence type="ECO:0000255" key="2">
    <source>
        <dbReference type="PROSITE-ProRule" id="PRU00798"/>
    </source>
</evidence>
<evidence type="ECO:0000256" key="3">
    <source>
        <dbReference type="SAM" id="MobiDB-lite"/>
    </source>
</evidence>
<evidence type="ECO:0000269" key="4">
    <source>
    </source>
</evidence>
<evidence type="ECO:0000303" key="5">
    <source>
    </source>
</evidence>
<evidence type="ECO:0000303" key="6">
    <source>
    </source>
</evidence>
<evidence type="ECO:0000305" key="7"/>
<name>SO5A1_HUMAN</name>
<dbReference type="EMBL" id="AF205075">
    <property type="protein sequence ID" value="AAG42207.1"/>
    <property type="molecule type" value="mRNA"/>
</dbReference>
<dbReference type="EMBL" id="AK022760">
    <property type="protein sequence ID" value="BAG51109.1"/>
    <property type="molecule type" value="mRNA"/>
</dbReference>
<dbReference type="EMBL" id="AC024680">
    <property type="status" value="NOT_ANNOTATED_CDS"/>
    <property type="molecule type" value="Genomic_DNA"/>
</dbReference>
<dbReference type="EMBL" id="AC079089">
    <property type="status" value="NOT_ANNOTATED_CDS"/>
    <property type="molecule type" value="Genomic_DNA"/>
</dbReference>
<dbReference type="EMBL" id="AC091047">
    <property type="status" value="NOT_ANNOTATED_CDS"/>
    <property type="molecule type" value="Genomic_DNA"/>
</dbReference>
<dbReference type="EMBL" id="CH471068">
    <property type="protein sequence ID" value="EAW86957.1"/>
    <property type="molecule type" value="Genomic_DNA"/>
</dbReference>
<dbReference type="EMBL" id="CH471068">
    <property type="protein sequence ID" value="EAW86958.1"/>
    <property type="molecule type" value="Genomic_DNA"/>
</dbReference>
<dbReference type="EMBL" id="BC137424">
    <property type="protein sequence ID" value="AAI37425.1"/>
    <property type="molecule type" value="mRNA"/>
</dbReference>
<dbReference type="EMBL" id="BC139755">
    <property type="protein sequence ID" value="AAI39756.1"/>
    <property type="molecule type" value="mRNA"/>
</dbReference>
<dbReference type="CCDS" id="CCDS55242.1">
    <molecule id="Q9H2Y9-2"/>
</dbReference>
<dbReference type="CCDS" id="CCDS55243.1">
    <molecule id="Q9H2Y9-3"/>
</dbReference>
<dbReference type="CCDS" id="CCDS6205.1">
    <molecule id="Q9H2Y9-1"/>
</dbReference>
<dbReference type="RefSeq" id="NP_001139480.1">
    <molecule id="Q9H2Y9-3"/>
    <property type="nucleotide sequence ID" value="NM_001146008.2"/>
</dbReference>
<dbReference type="RefSeq" id="NP_001139481.1">
    <molecule id="Q9H2Y9-2"/>
    <property type="nucleotide sequence ID" value="NM_001146009.1"/>
</dbReference>
<dbReference type="RefSeq" id="NP_112220.2">
    <molecule id="Q9H2Y9-1"/>
    <property type="nucleotide sequence ID" value="NM_030958.3"/>
</dbReference>
<dbReference type="RefSeq" id="XP_005251370.1">
    <property type="nucleotide sequence ID" value="XM_005251313.2"/>
</dbReference>
<dbReference type="RefSeq" id="XP_016869372.1">
    <property type="nucleotide sequence ID" value="XM_017013883.1"/>
</dbReference>
<dbReference type="SMR" id="Q9H2Y9"/>
<dbReference type="BioGRID" id="123587">
    <property type="interactions" value="2"/>
</dbReference>
<dbReference type="FunCoup" id="Q9H2Y9">
    <property type="interactions" value="1254"/>
</dbReference>
<dbReference type="IntAct" id="Q9H2Y9">
    <property type="interactions" value="2"/>
</dbReference>
<dbReference type="STRING" id="9606.ENSP00000260126"/>
<dbReference type="MEROPS" id="I01.972"/>
<dbReference type="TCDB" id="2.A.60.1.16">
    <property type="family name" value="the organo anion transporter (oat) family"/>
</dbReference>
<dbReference type="GlyCosmos" id="Q9H2Y9">
    <property type="glycosylation" value="7 sites, No reported glycans"/>
</dbReference>
<dbReference type="GlyGen" id="Q9H2Y9">
    <property type="glycosylation" value="7 sites, 1 N-linked glycan (1 site)"/>
</dbReference>
<dbReference type="iPTMnet" id="Q9H2Y9"/>
<dbReference type="PhosphoSitePlus" id="Q9H2Y9"/>
<dbReference type="BioMuta" id="SLCO5A1"/>
<dbReference type="DMDM" id="296452911"/>
<dbReference type="MassIVE" id="Q9H2Y9"/>
<dbReference type="PaxDb" id="9606-ENSP00000260126"/>
<dbReference type="PeptideAtlas" id="Q9H2Y9"/>
<dbReference type="ProteomicsDB" id="21498"/>
<dbReference type="ProteomicsDB" id="32322"/>
<dbReference type="ProteomicsDB" id="80635">
    <molecule id="Q9H2Y9-1"/>
</dbReference>
<dbReference type="Antibodypedia" id="12199">
    <property type="antibodies" value="30 antibodies from 16 providers"/>
</dbReference>
<dbReference type="DNASU" id="81796"/>
<dbReference type="Ensembl" id="ENST00000260126.9">
    <molecule id="Q9H2Y9-1"/>
    <property type="protein sequence ID" value="ENSP00000260126.3"/>
    <property type="gene ID" value="ENSG00000137571.11"/>
</dbReference>
<dbReference type="Ensembl" id="ENST00000524945.5">
    <molecule id="Q9H2Y9-3"/>
    <property type="protein sequence ID" value="ENSP00000434422.1"/>
    <property type="gene ID" value="ENSG00000137571.11"/>
</dbReference>
<dbReference type="Ensembl" id="ENST00000530307.1">
    <molecule id="Q9H2Y9-2"/>
    <property type="protein sequence ID" value="ENSP00000431611.1"/>
    <property type="gene ID" value="ENSG00000137571.11"/>
</dbReference>
<dbReference type="GeneID" id="81796"/>
<dbReference type="KEGG" id="hsa:81796"/>
<dbReference type="MANE-Select" id="ENST00000260126.9">
    <property type="protein sequence ID" value="ENSP00000260126.3"/>
    <property type="RefSeq nucleotide sequence ID" value="NM_030958.3"/>
    <property type="RefSeq protein sequence ID" value="NP_112220.2"/>
</dbReference>
<dbReference type="UCSC" id="uc003xyk.4">
    <molecule id="Q9H2Y9-1"/>
    <property type="organism name" value="human"/>
</dbReference>
<dbReference type="AGR" id="HGNC:19046"/>
<dbReference type="CTD" id="81796"/>
<dbReference type="DisGeNET" id="81796"/>
<dbReference type="GeneCards" id="SLCO5A1"/>
<dbReference type="HGNC" id="HGNC:19046">
    <property type="gene designation" value="SLCO5A1"/>
</dbReference>
<dbReference type="HPA" id="ENSG00000137571">
    <property type="expression patterns" value="Tissue enhanced (lymphoid tissue, skeletal muscle, tongue)"/>
</dbReference>
<dbReference type="MalaCards" id="SLCO5A1"/>
<dbReference type="MIM" id="613543">
    <property type="type" value="gene"/>
</dbReference>
<dbReference type="neXtProt" id="NX_Q9H2Y9"/>
<dbReference type="OpenTargets" id="ENSG00000137571"/>
<dbReference type="PharmGKB" id="PA134948571"/>
<dbReference type="VEuPathDB" id="HostDB:ENSG00000137571"/>
<dbReference type="eggNOG" id="KOG3626">
    <property type="taxonomic scope" value="Eukaryota"/>
</dbReference>
<dbReference type="GeneTree" id="ENSGT01130000278287"/>
<dbReference type="HOGENOM" id="CLU_008954_1_1_1"/>
<dbReference type="InParanoid" id="Q9H2Y9"/>
<dbReference type="OMA" id="NASLYLX"/>
<dbReference type="OrthoDB" id="5062115at2759"/>
<dbReference type="PAN-GO" id="Q9H2Y9">
    <property type="GO annotations" value="3 GO annotations based on evolutionary models"/>
</dbReference>
<dbReference type="PhylomeDB" id="Q9H2Y9"/>
<dbReference type="TreeFam" id="TF317540"/>
<dbReference type="PathwayCommons" id="Q9H2Y9"/>
<dbReference type="SignaLink" id="Q9H2Y9"/>
<dbReference type="BioGRID-ORCS" id="81796">
    <property type="hits" value="13 hits in 1142 CRISPR screens"/>
</dbReference>
<dbReference type="ChiTaRS" id="SLCO5A1">
    <property type="organism name" value="human"/>
</dbReference>
<dbReference type="GenomeRNAi" id="81796"/>
<dbReference type="Pharos" id="Q9H2Y9">
    <property type="development level" value="Tbio"/>
</dbReference>
<dbReference type="PRO" id="PR:Q9H2Y9"/>
<dbReference type="Proteomes" id="UP000005640">
    <property type="component" value="Chromosome 8"/>
</dbReference>
<dbReference type="RNAct" id="Q9H2Y9">
    <property type="molecule type" value="protein"/>
</dbReference>
<dbReference type="Bgee" id="ENSG00000137571">
    <property type="expression patterns" value="Expressed in skeletal muscle tissue of rectus abdominis and 109 other cell types or tissues"/>
</dbReference>
<dbReference type="ExpressionAtlas" id="Q9H2Y9">
    <property type="expression patterns" value="baseline and differential"/>
</dbReference>
<dbReference type="GO" id="GO:0016323">
    <property type="term" value="C:basolateral plasma membrane"/>
    <property type="evidence" value="ECO:0000318"/>
    <property type="project" value="GO_Central"/>
</dbReference>
<dbReference type="GO" id="GO:0043231">
    <property type="term" value="C:intracellular membrane-bounded organelle"/>
    <property type="evidence" value="ECO:0000314"/>
    <property type="project" value="HPA"/>
</dbReference>
<dbReference type="GO" id="GO:0005886">
    <property type="term" value="C:plasma membrane"/>
    <property type="evidence" value="ECO:0000314"/>
    <property type="project" value="ARUK-UCL"/>
</dbReference>
<dbReference type="GO" id="GO:0015347">
    <property type="term" value="F:sodium-independent organic anion transmembrane transporter activity"/>
    <property type="evidence" value="ECO:0000318"/>
    <property type="project" value="GO_Central"/>
</dbReference>
<dbReference type="GO" id="GO:0043252">
    <property type="term" value="P:sodium-independent organic anion transport"/>
    <property type="evidence" value="ECO:0000318"/>
    <property type="project" value="GO_Central"/>
</dbReference>
<dbReference type="CDD" id="cd17404">
    <property type="entry name" value="MFS_SLCO5_OATP5"/>
    <property type="match status" value="1"/>
</dbReference>
<dbReference type="FunFam" id="3.30.60.30:FF:000010">
    <property type="entry name" value="Solute carrier organic anion transporter family member"/>
    <property type="match status" value="1"/>
</dbReference>
<dbReference type="Gene3D" id="3.30.60.30">
    <property type="match status" value="1"/>
</dbReference>
<dbReference type="Gene3D" id="1.20.1250.20">
    <property type="entry name" value="MFS general substrate transporter like domains"/>
    <property type="match status" value="1"/>
</dbReference>
<dbReference type="InterPro" id="IPR002350">
    <property type="entry name" value="Kazal_dom"/>
</dbReference>
<dbReference type="InterPro" id="IPR036058">
    <property type="entry name" value="Kazal_dom_sf"/>
</dbReference>
<dbReference type="InterPro" id="IPR020846">
    <property type="entry name" value="MFS_dom"/>
</dbReference>
<dbReference type="InterPro" id="IPR036259">
    <property type="entry name" value="MFS_trans_sf"/>
</dbReference>
<dbReference type="InterPro" id="IPR004156">
    <property type="entry name" value="OATP"/>
</dbReference>
<dbReference type="NCBIfam" id="TIGR00805">
    <property type="entry name" value="oat"/>
    <property type="match status" value="1"/>
</dbReference>
<dbReference type="PANTHER" id="PTHR11388">
    <property type="entry name" value="ORGANIC ANION TRANSPORTER"/>
    <property type="match status" value="1"/>
</dbReference>
<dbReference type="PANTHER" id="PTHR11388:SF142">
    <property type="entry name" value="SOLUTE CARRIER ORGANIC ANION TRANSPORTER FAMILY MEMBER 5A1"/>
    <property type="match status" value="1"/>
</dbReference>
<dbReference type="Pfam" id="PF07648">
    <property type="entry name" value="Kazal_2"/>
    <property type="match status" value="1"/>
</dbReference>
<dbReference type="Pfam" id="PF03137">
    <property type="entry name" value="OATP"/>
    <property type="match status" value="1"/>
</dbReference>
<dbReference type="SUPFAM" id="SSF100895">
    <property type="entry name" value="Kazal-type serine protease inhibitors"/>
    <property type="match status" value="1"/>
</dbReference>
<dbReference type="SUPFAM" id="SSF103473">
    <property type="entry name" value="MFS general substrate transporter"/>
    <property type="match status" value="2"/>
</dbReference>
<dbReference type="PROSITE" id="PS51465">
    <property type="entry name" value="KAZAL_2"/>
    <property type="match status" value="1"/>
</dbReference>
<dbReference type="PROSITE" id="PS50850">
    <property type="entry name" value="MFS"/>
    <property type="match status" value="1"/>
</dbReference>
<comment type="subcellular location">
    <subcellularLocation>
        <location>Cell membrane</location>
        <topology>Multi-pass membrane protein</topology>
    </subcellularLocation>
</comment>
<comment type="alternative products">
    <event type="alternative splicing"/>
    <isoform>
        <id>Q9H2Y9-1</id>
        <name>1</name>
        <sequence type="displayed"/>
    </isoform>
    <isoform>
        <id>Q9H2Y9-2</id>
        <name>2</name>
        <sequence type="described" ref="VSP_045498"/>
    </isoform>
    <isoform>
        <id>Q9H2Y9-3</id>
        <name>3</name>
        <sequence type="described" ref="VSP_045499 VSP_045500"/>
    </isoform>
</comment>
<comment type="similarity">
    <text evidence="7">Belongs to the organo anion transporter (TC 2.A.60) family.</text>
</comment>